<sequence length="405" mass="43787">MVSTNAGGIASKQASSMAPNPGKATILALGHAFPQQLVMQDYVVDGFMRNTNCDDPELKEKLTRLCKTTTVKTRYVVMSEEILKSYPELAQEGQPTMKQRLDISNKAVTQMATEASLACVRSWGGALSEITHLVYVSSSEARFPGGDLHLARALGLSPDVRRVMLAFTGCSGGVAGLRVAKGLAESCPGARVLLATSETTIVGFRPPSPDRPYDLVGVALFGDGAGAAVVGADPTPVERPLFELHSALQRFLPDTDKTIDGRLTEEGIKFQLGRELPHIIEANVEAFCQKLMQEHPQAADKLTYGDMFWAVHPGGPAILTKMEGRLGLDGGKLRASRSALRDFGNASSNTIVYVLENMVEETRQRREEAAEEEDCEWGLILAFGPGITFEGILARNLQARARARD</sequence>
<reference key="1">
    <citation type="journal article" date="2005" name="Nature">
        <title>The map-based sequence of the rice genome.</title>
        <authorList>
            <consortium name="International rice genome sequencing project (IRGSP)"/>
        </authorList>
    </citation>
    <scope>NUCLEOTIDE SEQUENCE [LARGE SCALE GENOMIC DNA]</scope>
    <source>
        <strain>cv. Nipponbare</strain>
    </source>
</reference>
<reference key="2">
    <citation type="journal article" date="2008" name="Nucleic Acids Res.">
        <title>The rice annotation project database (RAP-DB): 2008 update.</title>
        <authorList>
            <consortium name="The rice annotation project (RAP)"/>
        </authorList>
    </citation>
    <scope>GENOME REANNOTATION</scope>
    <source>
        <strain>cv. Nipponbare</strain>
    </source>
</reference>
<reference key="3">
    <citation type="journal article" date="2013" name="Rice">
        <title>Improvement of the Oryza sativa Nipponbare reference genome using next generation sequence and optical map data.</title>
        <authorList>
            <person name="Kawahara Y."/>
            <person name="de la Bastide M."/>
            <person name="Hamilton J.P."/>
            <person name="Kanamori H."/>
            <person name="McCombie W.R."/>
            <person name="Ouyang S."/>
            <person name="Schwartz D.C."/>
            <person name="Tanaka T."/>
            <person name="Wu J."/>
            <person name="Zhou S."/>
            <person name="Childs K.L."/>
            <person name="Davidson R.M."/>
            <person name="Lin H."/>
            <person name="Quesada-Ocampo L."/>
            <person name="Vaillancourt B."/>
            <person name="Sakai H."/>
            <person name="Lee S.S."/>
            <person name="Kim J."/>
            <person name="Numa H."/>
            <person name="Itoh T."/>
            <person name="Buell C.R."/>
            <person name="Matsumoto T."/>
        </authorList>
    </citation>
    <scope>GENOME REANNOTATION</scope>
    <source>
        <strain>cv. Nipponbare</strain>
    </source>
</reference>
<reference key="4">
    <citation type="journal article" date="2017" name="J. Integr. Plant Biol.">
        <title>The polyketide synthase OsPKS2 is essential for pollen exine and Ubisch body patterning in rice.</title>
        <authorList>
            <person name="Zhu X."/>
            <person name="Yu J."/>
            <person name="Shi J."/>
            <person name="Tohge T."/>
            <person name="Fernie A.R."/>
            <person name="Meir S."/>
            <person name="Aharoni A."/>
            <person name="Xu D."/>
            <person name="Zhang D."/>
            <person name="Liang W."/>
        </authorList>
    </citation>
    <scope>FUNCTION</scope>
    <scope>CATALYTIC ACTIVITY</scope>
    <scope>DEVELOPMENTAL STAGE</scope>
    <scope>DISRUPTION PHENOTYPE</scope>
</reference>
<reference key="5">
    <citation type="journal article" date="2017" name="J. Plant Res.">
        <title>Genome-wide identification and phylogenetic analysis of the chalcone synthase gene family in rice.</title>
        <authorList>
            <person name="Hu L."/>
            <person name="He H."/>
            <person name="Zhu C."/>
            <person name="Peng X."/>
            <person name="Fu J."/>
            <person name="He X."/>
            <person name="Chen X."/>
            <person name="Ouyang L."/>
            <person name="Bian J."/>
            <person name="Liu S."/>
        </authorList>
    </citation>
    <scope>GENE FAMILY</scope>
    <scope>NOMENCLATURE</scope>
    <scope>TISSUE SPECIFICITY</scope>
</reference>
<reference key="6">
    <citation type="journal article" date="2018" name="Plant Cell Rep.">
        <title>OsPKS2 is required for rice male fertility by participating in pollen wall formation.</title>
        <authorList>
            <person name="Zou T."/>
            <person name="Liu M."/>
            <person name="Xiao Q."/>
            <person name="Wang T."/>
            <person name="Chen D."/>
            <person name="Luo T."/>
            <person name="Yuan G."/>
            <person name="Li Q."/>
            <person name="Zhu J."/>
            <person name="Liang Y."/>
            <person name="Deng Q."/>
            <person name="Wang S."/>
            <person name="Zheng A."/>
            <person name="Wang L."/>
            <person name="Li P."/>
            <person name="Li S."/>
        </authorList>
    </citation>
    <scope>FUNCTION</scope>
    <scope>SUBCELLULAR LOCATION</scope>
    <scope>DEVELOPMENTAL STAGE</scope>
    <scope>DISRUPTION PHENOTYPE</scope>
</reference>
<reference key="7">
    <citation type="journal article" date="2022" name="Plant Physiol.">
        <title>SWOLLEN TAPETUM AND STERILITY 1 is required for tapetum degeneration and pollen wall formation in rice.</title>
        <authorList>
            <person name="Yuan G."/>
            <person name="Zou T."/>
            <person name="He Z."/>
            <person name="Xiao Q."/>
            <person name="Li G."/>
            <person name="Liu S."/>
            <person name="Xiong P."/>
            <person name="Chen H."/>
            <person name="Peng K."/>
            <person name="Zhang X."/>
            <person name="Luo T."/>
            <person name="Zhou D."/>
            <person name="Yang S."/>
            <person name="Zhou F."/>
            <person name="Zhang K."/>
            <person name="Zheng K."/>
            <person name="Han Y."/>
            <person name="Zhu J."/>
            <person name="Liang Y."/>
            <person name="Deng Q."/>
            <person name="Wang S."/>
            <person name="Sun C."/>
            <person name="Yu X."/>
            <person name="Liu H."/>
            <person name="Wang L."/>
            <person name="Li P."/>
            <person name="Li S."/>
        </authorList>
    </citation>
    <scope>INTERACTION WITH STS1</scope>
</reference>
<name>PKS10_ORYSJ</name>
<proteinExistence type="evidence at protein level"/>
<dbReference type="EC" id="2.3.1.-" evidence="4"/>
<dbReference type="EMBL" id="AP005325">
    <property type="protein sequence ID" value="BAC21541.1"/>
    <property type="molecule type" value="Genomic_DNA"/>
</dbReference>
<dbReference type="EMBL" id="AP008213">
    <property type="protein sequence ID" value="BAF21363.2"/>
    <property type="molecule type" value="Genomic_DNA"/>
</dbReference>
<dbReference type="EMBL" id="AP014963">
    <property type="protein sequence ID" value="BAT01127.1"/>
    <property type="molecule type" value="Genomic_DNA"/>
</dbReference>
<dbReference type="SMR" id="Q8H305"/>
<dbReference type="FunCoup" id="Q8H305">
    <property type="interactions" value="86"/>
</dbReference>
<dbReference type="STRING" id="39947.Q8H305"/>
<dbReference type="PaxDb" id="39947-Q8H305"/>
<dbReference type="EnsemblPlants" id="Os07t0411300-01">
    <property type="protein sequence ID" value="Os07t0411300-01"/>
    <property type="gene ID" value="Os07g0411300"/>
</dbReference>
<dbReference type="Gramene" id="Os07t0411300-01">
    <property type="protein sequence ID" value="Os07t0411300-01"/>
    <property type="gene ID" value="Os07g0411300"/>
</dbReference>
<dbReference type="KEGG" id="dosa:Os07g0411300"/>
<dbReference type="KEGG" id="osa:4343009"/>
<dbReference type="eggNOG" id="ENOG502QSSY">
    <property type="taxonomic scope" value="Eukaryota"/>
</dbReference>
<dbReference type="HOGENOM" id="CLU_034992_2_0_1"/>
<dbReference type="InParanoid" id="Q8H305"/>
<dbReference type="OMA" id="ACVRSWG"/>
<dbReference type="OrthoDB" id="883077at2759"/>
<dbReference type="Proteomes" id="UP000000763">
    <property type="component" value="Chromosome 7"/>
</dbReference>
<dbReference type="Proteomes" id="UP000059680">
    <property type="component" value="Chromosome 7"/>
</dbReference>
<dbReference type="GO" id="GO:0005783">
    <property type="term" value="C:endoplasmic reticulum"/>
    <property type="evidence" value="ECO:0007669"/>
    <property type="project" value="EnsemblPlants"/>
</dbReference>
<dbReference type="GO" id="GO:0016747">
    <property type="term" value="F:acyltransferase activity, transferring groups other than amino-acyl groups"/>
    <property type="evidence" value="ECO:0000318"/>
    <property type="project" value="GO_Central"/>
</dbReference>
<dbReference type="GO" id="GO:0090439">
    <property type="term" value="F:tetraketide alpha-pyrone synthase activity"/>
    <property type="evidence" value="ECO:0007669"/>
    <property type="project" value="EnsemblPlants"/>
</dbReference>
<dbReference type="GO" id="GO:0009813">
    <property type="term" value="P:flavonoid biosynthetic process"/>
    <property type="evidence" value="ECO:0007669"/>
    <property type="project" value="UniProtKB-ARBA"/>
</dbReference>
<dbReference type="GO" id="GO:0010208">
    <property type="term" value="P:pollen wall assembly"/>
    <property type="evidence" value="ECO:0000315"/>
    <property type="project" value="UniProtKB"/>
</dbReference>
<dbReference type="GO" id="GO:0030639">
    <property type="term" value="P:polyketide biosynthetic process"/>
    <property type="evidence" value="ECO:0007669"/>
    <property type="project" value="EnsemblPlants"/>
</dbReference>
<dbReference type="GO" id="GO:0080110">
    <property type="term" value="P:sporopollenin biosynthetic process"/>
    <property type="evidence" value="ECO:0007669"/>
    <property type="project" value="EnsemblPlants"/>
</dbReference>
<dbReference type="CDD" id="cd00831">
    <property type="entry name" value="CHS_like"/>
    <property type="match status" value="1"/>
</dbReference>
<dbReference type="FunFam" id="3.40.47.10:FF:000014">
    <property type="entry name" value="Chalcone synthase 1"/>
    <property type="match status" value="1"/>
</dbReference>
<dbReference type="FunFam" id="3.40.47.10:FF:000025">
    <property type="entry name" value="Chalcone synthase 2"/>
    <property type="match status" value="1"/>
</dbReference>
<dbReference type="Gene3D" id="3.40.47.10">
    <property type="match status" value="2"/>
</dbReference>
<dbReference type="InterPro" id="IPR012328">
    <property type="entry name" value="Chalcone/stilbene_synt_C"/>
</dbReference>
<dbReference type="InterPro" id="IPR001099">
    <property type="entry name" value="Chalcone/stilbene_synt_N"/>
</dbReference>
<dbReference type="InterPro" id="IPR011141">
    <property type="entry name" value="Polyketide_synthase_type-III"/>
</dbReference>
<dbReference type="InterPro" id="IPR016039">
    <property type="entry name" value="Thiolase-like"/>
</dbReference>
<dbReference type="PANTHER" id="PTHR11877">
    <property type="entry name" value="HYDROXYMETHYLGLUTARYL-COA SYNTHASE"/>
    <property type="match status" value="1"/>
</dbReference>
<dbReference type="PANTHER" id="PTHR11877:SF10">
    <property type="entry name" value="TYPE III POLYKETIDE SYNTHASE B"/>
    <property type="match status" value="1"/>
</dbReference>
<dbReference type="Pfam" id="PF02797">
    <property type="entry name" value="Chal_sti_synt_C"/>
    <property type="match status" value="1"/>
</dbReference>
<dbReference type="Pfam" id="PF00195">
    <property type="entry name" value="Chal_sti_synt_N"/>
    <property type="match status" value="1"/>
</dbReference>
<dbReference type="PIRSF" id="PIRSF000451">
    <property type="entry name" value="PKS_III"/>
    <property type="match status" value="1"/>
</dbReference>
<dbReference type="SUPFAM" id="SSF53901">
    <property type="entry name" value="Thiolase-like"/>
    <property type="match status" value="2"/>
</dbReference>
<comment type="function">
    <text evidence="4 5">Plant type III polyketide synthases (PKSs) that catalyzes the condensation of fatty acyl-CoA with malonyl-CoA to generate triketide and tetraketide alpha-pyrones, the main components of pollen exine and potential sporopollenin precursors (PubMed:28783252). May be involved in the synthesis of sporopollenin precursors in tapetal cells to regulate pollen wall formation (PubMed:29411094). Required for exine and Ubisch body formation in anthers (PubMed:28783252). Does not possess chalcone synthase (CHS) activity in vitro with the substrates 4-coumaroyl-CoA and malonyl-CoA (PubMed:28783252).</text>
</comment>
<comment type="subunit">
    <text evidence="6">Interacts with STS1.</text>
</comment>
<comment type="subcellular location">
    <subcellularLocation>
        <location evidence="5">Endoplasmic reticulum</location>
    </subcellularLocation>
</comment>
<comment type="tissue specificity">
    <text evidence="3">Expressed in adult flowers.</text>
</comment>
<comment type="developmental stage">
    <text evidence="4 5">During anther development, expressed between the microspore tetrad stage and the vacuolated microspore stage, with the highest expression level at the young microspore stage.</text>
</comment>
<comment type="disruption phenotype">
    <text evidence="4 5">Defective pollen exine and Ubisch bodies patterning, shrunken and aborted pollen grains, and male sterility (PubMed:28783252). Male sterility and defective pollen walls (PubMed:29411094). Altered composition of lipidic and phenolic compounds in anthers (PubMed:28783252). No significant reduction in sporopollenin accumulation (PubMed:28783252).</text>
</comment>
<comment type="similarity">
    <text evidence="9">Belongs to the thiolase-like superfamily. Chalcone/stilbene synthases family.</text>
</comment>
<keyword id="KW-0012">Acyltransferase</keyword>
<keyword id="KW-0256">Endoplasmic reticulum</keyword>
<keyword id="KW-1185">Reference proteome</keyword>
<keyword id="KW-0808">Transferase</keyword>
<evidence type="ECO:0000250" key="1">
    <source>
        <dbReference type="UniProtKB" id="Q94FV7"/>
    </source>
</evidence>
<evidence type="ECO:0000256" key="2">
    <source>
        <dbReference type="SAM" id="MobiDB-lite"/>
    </source>
</evidence>
<evidence type="ECO:0000269" key="3">
    <source>
    </source>
</evidence>
<evidence type="ECO:0000269" key="4">
    <source>
    </source>
</evidence>
<evidence type="ECO:0000269" key="5">
    <source>
    </source>
</evidence>
<evidence type="ECO:0000269" key="6">
    <source>
    </source>
</evidence>
<evidence type="ECO:0000303" key="7">
    <source>
    </source>
</evidence>
<evidence type="ECO:0000303" key="8">
    <source>
    </source>
</evidence>
<evidence type="ECO:0000305" key="9"/>
<evidence type="ECO:0000312" key="10">
    <source>
        <dbReference type="EMBL" id="BAT01127.1"/>
    </source>
</evidence>
<organism>
    <name type="scientific">Oryza sativa subsp. japonica</name>
    <name type="common">Rice</name>
    <dbReference type="NCBI Taxonomy" id="39947"/>
    <lineage>
        <taxon>Eukaryota</taxon>
        <taxon>Viridiplantae</taxon>
        <taxon>Streptophyta</taxon>
        <taxon>Embryophyta</taxon>
        <taxon>Tracheophyta</taxon>
        <taxon>Spermatophyta</taxon>
        <taxon>Magnoliopsida</taxon>
        <taxon>Liliopsida</taxon>
        <taxon>Poales</taxon>
        <taxon>Poaceae</taxon>
        <taxon>BOP clade</taxon>
        <taxon>Oryzoideae</taxon>
        <taxon>Oryzeae</taxon>
        <taxon>Oryzinae</taxon>
        <taxon>Oryza</taxon>
        <taxon>Oryza sativa</taxon>
    </lineage>
</organism>
<feature type="chain" id="PRO_0000462178" description="Type III polyketide synthase 10">
    <location>
        <begin position="1"/>
        <end position="405"/>
    </location>
</feature>
<feature type="region of interest" description="Disordered" evidence="2">
    <location>
        <begin position="1"/>
        <end position="20"/>
    </location>
</feature>
<feature type="compositionally biased region" description="Polar residues" evidence="2">
    <location>
        <begin position="1"/>
        <end position="18"/>
    </location>
</feature>
<feature type="active site" description="Nucleophile" evidence="1">
    <location>
        <position position="170"/>
    </location>
</feature>
<gene>
    <name evidence="7" type="primary">PKS10</name>
    <name evidence="8" type="synonym">PKS2</name>
    <name evidence="10" type="ordered locus">Os07g0411300</name>
    <name evidence="9" type="ordered locus">LOC_Os07g22850</name>
</gene>
<protein>
    <recommendedName>
        <fullName evidence="7">Type III polyketide synthase 10</fullName>
        <shortName evidence="7">OsPKS10</shortName>
        <ecNumber evidence="4">2.3.1.-</ecNumber>
    </recommendedName>
    <alternativeName>
        <fullName evidence="8">Type III polyketide synthase 2</fullName>
        <shortName evidence="8">OsPKS2</shortName>
    </alternativeName>
</protein>
<accession>Q8H305</accession>
<accession>A0A5S6RAJ2</accession>
<accession>Q0D710</accession>